<proteinExistence type="inferred from homology"/>
<evidence type="ECO:0000255" key="1">
    <source>
        <dbReference type="HAMAP-Rule" id="MF_01703"/>
    </source>
</evidence>
<feature type="chain" id="PRO_0000092576" description="ATP-dependent lipid A-core flippase">
    <location>
        <begin position="1"/>
        <end position="572"/>
    </location>
</feature>
<feature type="transmembrane region" description="Helical" evidence="1">
    <location>
        <begin position="14"/>
        <end position="34"/>
    </location>
</feature>
<feature type="transmembrane region" description="Helical" evidence="1">
    <location>
        <begin position="55"/>
        <end position="75"/>
    </location>
</feature>
<feature type="transmembrane region" description="Helical" evidence="1">
    <location>
        <begin position="148"/>
        <end position="168"/>
    </location>
</feature>
<feature type="transmembrane region" description="Helical" evidence="1">
    <location>
        <begin position="249"/>
        <end position="269"/>
    </location>
</feature>
<feature type="transmembrane region" description="Helical" evidence="1">
    <location>
        <begin position="272"/>
        <end position="292"/>
    </location>
</feature>
<feature type="domain" description="ABC transmembrane type-1" evidence="1">
    <location>
        <begin position="22"/>
        <end position="304"/>
    </location>
</feature>
<feature type="domain" description="ABC transporter" evidence="1">
    <location>
        <begin position="338"/>
        <end position="571"/>
    </location>
</feature>
<feature type="binding site" evidence="1">
    <location>
        <begin position="370"/>
        <end position="377"/>
    </location>
    <ligand>
        <name>ATP</name>
        <dbReference type="ChEBI" id="CHEBI:30616"/>
    </ligand>
</feature>
<comment type="function">
    <text evidence="1">Involved in lipopolysaccharide (LPS) biosynthesis. Translocates lipid A-core from the inner to the outer leaflet of the inner membrane. Transmembrane domains (TMD) form a pore in the inner membrane and the ATP-binding domain (NBD) is responsible for energy generation.</text>
</comment>
<comment type="catalytic activity">
    <reaction evidence="1">
        <text>ATP + H2O + lipid A-core oligosaccharideSide 1 = ADP + phosphate + lipid A-core oligosaccharideSide 2.</text>
        <dbReference type="EC" id="7.5.2.6"/>
    </reaction>
</comment>
<comment type="subunit">
    <text evidence="1">Homodimer.</text>
</comment>
<comment type="subcellular location">
    <subcellularLocation>
        <location evidence="1">Cell inner membrane</location>
        <topology evidence="1">Multi-pass membrane protein</topology>
    </subcellularLocation>
</comment>
<comment type="domain">
    <text evidence="1">In MsbA the ATP-binding domain (NBD) and the transmembrane domain (TMD) are fused.</text>
</comment>
<comment type="similarity">
    <text evidence="1">Belongs to the ABC transporter superfamily. Lipid exporter (TC 3.A.1.106) family.</text>
</comment>
<sequence length="572" mass="63983">MTNKEIIKRLYHEIIPYKIPLFIAMFAMIVVAALTGAQAYLVKDLLDKIFMEKDVFFLQILPLIIIAIFFTKGVLYYTYAIILERVGQSIIRDFRLKIFAHIHRQSLSFFHNTPTGTLISRVLSDVALMQQAVSTVIIQLLRDFFQVIFLLGVIFYMNWKLALICFLIIPLAAIPIVKFGKIFRKLSTKTQEETAEVSNMLHETISGSRIVKAFCREDYEVERFHRQVETLFTITMKNAKYRVFQSPLMEIIGGFAVAGIIWVGGSEVINGSATPGTFFAFLTAMITAYDPVKRVSQVNSTIQQGLASAQRVFAILDIKPEIEDKPEATSLAPFKESIEFHDVSFSYGTEKILSHINLKVPAGEALAIVGPSGGGKTTLTNLIPRFIDLQEGSITIDGTDIRDVTTNSLRNQIAMVTQQTILFNDTIRNNIAYGKDSCTEEEIRRAAKAAHALTFIEELPNGFDTALGEGGAKLSGGQRQRISIARALLADAPILILDEATSALDTESEREVQKALENLMQNRTTFVIAHRLSTIKNASRIVVVKKGKIVEEGSHEELLKLEGEYQLLYNMQ</sequence>
<reference key="1">
    <citation type="journal article" date="2004" name="Environ. Microbiol.">
        <title>The genome of Desulfotalea psychrophila, a sulfate-reducing bacterium from permanently cold Arctic sediments.</title>
        <authorList>
            <person name="Rabus R."/>
            <person name="Ruepp A."/>
            <person name="Frickey T."/>
            <person name="Rattei T."/>
            <person name="Fartmann B."/>
            <person name="Stark M."/>
            <person name="Bauer M."/>
            <person name="Zibat A."/>
            <person name="Lombardot T."/>
            <person name="Becker I."/>
            <person name="Amann J."/>
            <person name="Gellner K."/>
            <person name="Teeling H."/>
            <person name="Leuschner W.D."/>
            <person name="Gloeckner F.-O."/>
            <person name="Lupas A.N."/>
            <person name="Amann R."/>
            <person name="Klenk H.-P."/>
        </authorList>
    </citation>
    <scope>NUCLEOTIDE SEQUENCE [LARGE SCALE GENOMIC DNA]</scope>
    <source>
        <strain>DSM 12343 / LSv54</strain>
    </source>
</reference>
<name>MSBA_DESPS</name>
<accession>Q6AJW3</accession>
<dbReference type="EC" id="7.5.2.6" evidence="1"/>
<dbReference type="EMBL" id="CR522870">
    <property type="protein sequence ID" value="CAG37363.1"/>
    <property type="molecule type" value="Genomic_DNA"/>
</dbReference>
<dbReference type="RefSeq" id="WP_011189875.1">
    <property type="nucleotide sequence ID" value="NC_006138.1"/>
</dbReference>
<dbReference type="SMR" id="Q6AJW3"/>
<dbReference type="STRING" id="177439.DP2634"/>
<dbReference type="KEGG" id="dps:DP2634"/>
<dbReference type="eggNOG" id="COG1132">
    <property type="taxonomic scope" value="Bacteria"/>
</dbReference>
<dbReference type="HOGENOM" id="CLU_000604_84_3_7"/>
<dbReference type="OrthoDB" id="9772049at2"/>
<dbReference type="Proteomes" id="UP000000602">
    <property type="component" value="Chromosome"/>
</dbReference>
<dbReference type="GO" id="GO:0005886">
    <property type="term" value="C:plasma membrane"/>
    <property type="evidence" value="ECO:0007669"/>
    <property type="project" value="UniProtKB-SubCell"/>
</dbReference>
<dbReference type="GO" id="GO:0015421">
    <property type="term" value="F:ABC-type oligopeptide transporter activity"/>
    <property type="evidence" value="ECO:0007669"/>
    <property type="project" value="TreeGrafter"/>
</dbReference>
<dbReference type="GO" id="GO:0005524">
    <property type="term" value="F:ATP binding"/>
    <property type="evidence" value="ECO:0007669"/>
    <property type="project" value="UniProtKB-KW"/>
</dbReference>
<dbReference type="GO" id="GO:0016887">
    <property type="term" value="F:ATP hydrolysis activity"/>
    <property type="evidence" value="ECO:0007669"/>
    <property type="project" value="InterPro"/>
</dbReference>
<dbReference type="GO" id="GO:0034040">
    <property type="term" value="F:ATPase-coupled lipid transmembrane transporter activity"/>
    <property type="evidence" value="ECO:0007669"/>
    <property type="project" value="InterPro"/>
</dbReference>
<dbReference type="CDD" id="cd18552">
    <property type="entry name" value="ABC_6TM_MsbA_like"/>
    <property type="match status" value="1"/>
</dbReference>
<dbReference type="CDD" id="cd03251">
    <property type="entry name" value="ABCC_MsbA"/>
    <property type="match status" value="1"/>
</dbReference>
<dbReference type="FunFam" id="3.40.50.300:FF:000287">
    <property type="entry name" value="Multidrug ABC transporter ATP-binding protein"/>
    <property type="match status" value="1"/>
</dbReference>
<dbReference type="Gene3D" id="1.20.1560.10">
    <property type="entry name" value="ABC transporter type 1, transmembrane domain"/>
    <property type="match status" value="1"/>
</dbReference>
<dbReference type="Gene3D" id="3.40.50.300">
    <property type="entry name" value="P-loop containing nucleotide triphosphate hydrolases"/>
    <property type="match status" value="1"/>
</dbReference>
<dbReference type="InterPro" id="IPR003593">
    <property type="entry name" value="AAA+_ATPase"/>
</dbReference>
<dbReference type="InterPro" id="IPR011527">
    <property type="entry name" value="ABC1_TM_dom"/>
</dbReference>
<dbReference type="InterPro" id="IPR036640">
    <property type="entry name" value="ABC1_TM_sf"/>
</dbReference>
<dbReference type="InterPro" id="IPR003439">
    <property type="entry name" value="ABC_transporter-like_ATP-bd"/>
</dbReference>
<dbReference type="InterPro" id="IPR017871">
    <property type="entry name" value="ABC_transporter-like_CS"/>
</dbReference>
<dbReference type="InterPro" id="IPR011917">
    <property type="entry name" value="ABC_transpr_lipidA"/>
</dbReference>
<dbReference type="InterPro" id="IPR027417">
    <property type="entry name" value="P-loop_NTPase"/>
</dbReference>
<dbReference type="InterPro" id="IPR039421">
    <property type="entry name" value="Type_1_exporter"/>
</dbReference>
<dbReference type="NCBIfam" id="TIGR02203">
    <property type="entry name" value="MsbA_lipidA"/>
    <property type="match status" value="1"/>
</dbReference>
<dbReference type="PANTHER" id="PTHR43394:SF1">
    <property type="entry name" value="ATP-BINDING CASSETTE SUB-FAMILY B MEMBER 10, MITOCHONDRIAL"/>
    <property type="match status" value="1"/>
</dbReference>
<dbReference type="PANTHER" id="PTHR43394">
    <property type="entry name" value="ATP-DEPENDENT PERMEASE MDL1, MITOCHONDRIAL"/>
    <property type="match status" value="1"/>
</dbReference>
<dbReference type="Pfam" id="PF00664">
    <property type="entry name" value="ABC_membrane"/>
    <property type="match status" value="1"/>
</dbReference>
<dbReference type="Pfam" id="PF00005">
    <property type="entry name" value="ABC_tran"/>
    <property type="match status" value="1"/>
</dbReference>
<dbReference type="SMART" id="SM00382">
    <property type="entry name" value="AAA"/>
    <property type="match status" value="1"/>
</dbReference>
<dbReference type="SUPFAM" id="SSF90123">
    <property type="entry name" value="ABC transporter transmembrane region"/>
    <property type="match status" value="1"/>
</dbReference>
<dbReference type="SUPFAM" id="SSF52540">
    <property type="entry name" value="P-loop containing nucleoside triphosphate hydrolases"/>
    <property type="match status" value="1"/>
</dbReference>
<dbReference type="PROSITE" id="PS50929">
    <property type="entry name" value="ABC_TM1F"/>
    <property type="match status" value="1"/>
</dbReference>
<dbReference type="PROSITE" id="PS00211">
    <property type="entry name" value="ABC_TRANSPORTER_1"/>
    <property type="match status" value="1"/>
</dbReference>
<dbReference type="PROSITE" id="PS50893">
    <property type="entry name" value="ABC_TRANSPORTER_2"/>
    <property type="match status" value="1"/>
</dbReference>
<dbReference type="PROSITE" id="PS51239">
    <property type="entry name" value="MSBA"/>
    <property type="match status" value="1"/>
</dbReference>
<keyword id="KW-0067">ATP-binding</keyword>
<keyword id="KW-0997">Cell inner membrane</keyword>
<keyword id="KW-1003">Cell membrane</keyword>
<keyword id="KW-0445">Lipid transport</keyword>
<keyword id="KW-0472">Membrane</keyword>
<keyword id="KW-0547">Nucleotide-binding</keyword>
<keyword id="KW-1185">Reference proteome</keyword>
<keyword id="KW-1278">Translocase</keyword>
<keyword id="KW-0812">Transmembrane</keyword>
<keyword id="KW-1133">Transmembrane helix</keyword>
<keyword id="KW-0813">Transport</keyword>
<organism>
    <name type="scientific">Desulfotalea psychrophila (strain LSv54 / DSM 12343)</name>
    <dbReference type="NCBI Taxonomy" id="177439"/>
    <lineage>
        <taxon>Bacteria</taxon>
        <taxon>Pseudomonadati</taxon>
        <taxon>Thermodesulfobacteriota</taxon>
        <taxon>Desulfobulbia</taxon>
        <taxon>Desulfobulbales</taxon>
        <taxon>Desulfocapsaceae</taxon>
        <taxon>Desulfotalea</taxon>
    </lineage>
</organism>
<protein>
    <recommendedName>
        <fullName evidence="1">ATP-dependent lipid A-core flippase</fullName>
        <ecNumber evidence="1">7.5.2.6</ecNumber>
    </recommendedName>
    <alternativeName>
        <fullName evidence="1">Lipid A export ATP-binding/permease protein MsbA</fullName>
    </alternativeName>
</protein>
<gene>
    <name evidence="1" type="primary">msbA</name>
    <name type="ordered locus">DP2634</name>
</gene>